<accession>Q99P25</accession>
<accession>Q9DA98</accession>
<protein>
    <recommendedName>
        <fullName>Translin-associated factor X-interacting protein 1</fullName>
        <shortName>Trax-interacting protein 1</shortName>
    </recommendedName>
</protein>
<organism>
    <name type="scientific">Mus musculus</name>
    <name type="common">Mouse</name>
    <dbReference type="NCBI Taxonomy" id="10090"/>
    <lineage>
        <taxon>Eukaryota</taxon>
        <taxon>Metazoa</taxon>
        <taxon>Chordata</taxon>
        <taxon>Craniata</taxon>
        <taxon>Vertebrata</taxon>
        <taxon>Euteleostomi</taxon>
        <taxon>Mammalia</taxon>
        <taxon>Eutheria</taxon>
        <taxon>Euarchontoglires</taxon>
        <taxon>Glires</taxon>
        <taxon>Rodentia</taxon>
        <taxon>Myomorpha</taxon>
        <taxon>Muroidea</taxon>
        <taxon>Muridae</taxon>
        <taxon>Murinae</taxon>
        <taxon>Mus</taxon>
        <taxon>Mus</taxon>
    </lineage>
</organism>
<keyword id="KW-0175">Coiled coil</keyword>
<keyword id="KW-0963">Cytoplasm</keyword>
<keyword id="KW-0217">Developmental protein</keyword>
<keyword id="KW-0221">Differentiation</keyword>
<keyword id="KW-1185">Reference proteome</keyword>
<keyword id="KW-0744">Spermatogenesis</keyword>
<dbReference type="EMBL" id="AF343750">
    <property type="protein sequence ID" value="AAK13524.1"/>
    <property type="status" value="ALT_INIT"/>
    <property type="molecule type" value="mRNA"/>
</dbReference>
<dbReference type="EMBL" id="AK006041">
    <property type="protein sequence ID" value="BAB24380.1"/>
    <property type="molecule type" value="mRNA"/>
</dbReference>
<dbReference type="CCDS" id="CCDS22614.1"/>
<dbReference type="RefSeq" id="NP_077765.1">
    <property type="nucleotide sequence ID" value="NM_024445.4"/>
</dbReference>
<dbReference type="SMR" id="Q99P25"/>
<dbReference type="BioGRID" id="215241">
    <property type="interactions" value="2"/>
</dbReference>
<dbReference type="FunCoup" id="Q99P25">
    <property type="interactions" value="446"/>
</dbReference>
<dbReference type="STRING" id="10090.ENSMUSP00000034365"/>
<dbReference type="PhosphoSitePlus" id="Q99P25"/>
<dbReference type="jPOST" id="Q99P25"/>
<dbReference type="PaxDb" id="10090-ENSMUSP00000034365"/>
<dbReference type="ProteomicsDB" id="298395"/>
<dbReference type="Antibodypedia" id="29631">
    <property type="antibodies" value="33 antibodies from 15 providers"/>
</dbReference>
<dbReference type="Ensembl" id="ENSMUST00000034365.5">
    <property type="protein sequence ID" value="ENSMUSP00000034365.5"/>
    <property type="gene ID" value="ENSMUSG00000031893.8"/>
</dbReference>
<dbReference type="GeneID" id="72236"/>
<dbReference type="KEGG" id="mmu:72236"/>
<dbReference type="UCSC" id="uc009nee.1">
    <property type="organism name" value="mouse"/>
</dbReference>
<dbReference type="AGR" id="MGI:1919486"/>
<dbReference type="CTD" id="55815"/>
<dbReference type="MGI" id="MGI:1919486">
    <property type="gene designation" value="Tsnaxip1"/>
</dbReference>
<dbReference type="VEuPathDB" id="HostDB:ENSMUSG00000031893"/>
<dbReference type="eggNOG" id="ENOG502QTWK">
    <property type="taxonomic scope" value="Eukaryota"/>
</dbReference>
<dbReference type="GeneTree" id="ENSGT00390000018598"/>
<dbReference type="HOGENOM" id="CLU_028246_0_0_1"/>
<dbReference type="InParanoid" id="Q99P25"/>
<dbReference type="OMA" id="EWGYNLH"/>
<dbReference type="OrthoDB" id="261426at2759"/>
<dbReference type="PhylomeDB" id="Q99P25"/>
<dbReference type="TreeFam" id="TF329002"/>
<dbReference type="BioGRID-ORCS" id="72236">
    <property type="hits" value="4 hits in 75 CRISPR screens"/>
</dbReference>
<dbReference type="PRO" id="PR:Q99P25"/>
<dbReference type="Proteomes" id="UP000000589">
    <property type="component" value="Chromosome 8"/>
</dbReference>
<dbReference type="RNAct" id="Q99P25">
    <property type="molecule type" value="protein"/>
</dbReference>
<dbReference type="Bgee" id="ENSMUSG00000031893">
    <property type="expression patterns" value="Expressed in seminiferous tubule of testis and 59 other cell types or tissues"/>
</dbReference>
<dbReference type="ExpressionAtlas" id="Q99P25">
    <property type="expression patterns" value="baseline and differential"/>
</dbReference>
<dbReference type="GO" id="GO:0005737">
    <property type="term" value="C:cytoplasm"/>
    <property type="evidence" value="ECO:0000314"/>
    <property type="project" value="MGI"/>
</dbReference>
<dbReference type="GO" id="GO:0048471">
    <property type="term" value="C:perinuclear region of cytoplasm"/>
    <property type="evidence" value="ECO:0007669"/>
    <property type="project" value="UniProtKB-SubCell"/>
</dbReference>
<dbReference type="GO" id="GO:0030154">
    <property type="term" value="P:cell differentiation"/>
    <property type="evidence" value="ECO:0007669"/>
    <property type="project" value="UniProtKB-KW"/>
</dbReference>
<dbReference type="GO" id="GO:0007283">
    <property type="term" value="P:spermatogenesis"/>
    <property type="evidence" value="ECO:0007669"/>
    <property type="project" value="UniProtKB-KW"/>
</dbReference>
<dbReference type="InterPro" id="IPR032755">
    <property type="entry name" value="TSNAXIP1_N"/>
</dbReference>
<dbReference type="PANTHER" id="PTHR16306">
    <property type="entry name" value="TRANSLIN-ASSOCIATED FACTOR X-INTERACTING PROTEIN 1"/>
    <property type="match status" value="1"/>
</dbReference>
<dbReference type="PANTHER" id="PTHR16306:SF0">
    <property type="entry name" value="TRANSLIN-ASSOCIATED FACTOR X-INTERACTING PROTEIN 1"/>
    <property type="match status" value="1"/>
</dbReference>
<dbReference type="Pfam" id="PF15739">
    <property type="entry name" value="TSNAXIP1_N"/>
    <property type="match status" value="1"/>
</dbReference>
<comment type="function">
    <text evidence="3">Possible role in spermatogenesis.</text>
</comment>
<comment type="subunit">
    <text evidence="3">Interacts with TSNAX.</text>
</comment>
<comment type="subcellular location">
    <subcellularLocation>
        <location evidence="3">Cytoplasm</location>
        <location evidence="3">Perinuclear region</location>
    </subcellularLocation>
</comment>
<comment type="tissue specificity">
    <text evidence="3">Specifically expressed in testes. Predominantly detected in the post-meiotic stages of germ cells.</text>
</comment>
<comment type="sequence caution" evidence="4">
    <conflict type="erroneous initiation">
        <sequence resource="EMBL-CDS" id="AAK13524"/>
    </conflict>
</comment>
<gene>
    <name evidence="7" type="primary">Tsnaxip1</name>
    <name type="synonym">Txi1</name>
</gene>
<reference evidence="4 5" key="1">
    <citation type="journal article" date="2002" name="Genomics">
        <title>Identification and characterization of cDNAs encoding four novel proteins that interact with translin associated factor-X.</title>
        <authorList>
            <person name="Bray J.D."/>
            <person name="Chennathukuzhi V.M."/>
            <person name="Hecht N.B."/>
        </authorList>
    </citation>
    <scope>NUCLEOTIDE SEQUENCE [MRNA]</scope>
    <scope>FUNCTION</scope>
    <scope>SUBCELLULAR LOCATION</scope>
    <scope>TISSUE SPECIFICITY</scope>
    <scope>INTERACTION WITH TSNAX</scope>
    <source>
        <tissue evidence="5">Testis</tissue>
    </source>
</reference>
<reference evidence="6" key="2">
    <citation type="journal article" date="2005" name="Science">
        <title>The transcriptional landscape of the mammalian genome.</title>
        <authorList>
            <person name="Carninci P."/>
            <person name="Kasukawa T."/>
            <person name="Katayama S."/>
            <person name="Gough J."/>
            <person name="Frith M.C."/>
            <person name="Maeda N."/>
            <person name="Oyama R."/>
            <person name="Ravasi T."/>
            <person name="Lenhard B."/>
            <person name="Wells C."/>
            <person name="Kodzius R."/>
            <person name="Shimokawa K."/>
            <person name="Bajic V.B."/>
            <person name="Brenner S.E."/>
            <person name="Batalov S."/>
            <person name="Forrest A.R."/>
            <person name="Zavolan M."/>
            <person name="Davis M.J."/>
            <person name="Wilming L.G."/>
            <person name="Aidinis V."/>
            <person name="Allen J.E."/>
            <person name="Ambesi-Impiombato A."/>
            <person name="Apweiler R."/>
            <person name="Aturaliya R.N."/>
            <person name="Bailey T.L."/>
            <person name="Bansal M."/>
            <person name="Baxter L."/>
            <person name="Beisel K.W."/>
            <person name="Bersano T."/>
            <person name="Bono H."/>
            <person name="Chalk A.M."/>
            <person name="Chiu K.P."/>
            <person name="Choudhary V."/>
            <person name="Christoffels A."/>
            <person name="Clutterbuck D.R."/>
            <person name="Crowe M.L."/>
            <person name="Dalla E."/>
            <person name="Dalrymple B.P."/>
            <person name="de Bono B."/>
            <person name="Della Gatta G."/>
            <person name="di Bernardo D."/>
            <person name="Down T."/>
            <person name="Engstrom P."/>
            <person name="Fagiolini M."/>
            <person name="Faulkner G."/>
            <person name="Fletcher C.F."/>
            <person name="Fukushima T."/>
            <person name="Furuno M."/>
            <person name="Futaki S."/>
            <person name="Gariboldi M."/>
            <person name="Georgii-Hemming P."/>
            <person name="Gingeras T.R."/>
            <person name="Gojobori T."/>
            <person name="Green R.E."/>
            <person name="Gustincich S."/>
            <person name="Harbers M."/>
            <person name="Hayashi Y."/>
            <person name="Hensch T.K."/>
            <person name="Hirokawa N."/>
            <person name="Hill D."/>
            <person name="Huminiecki L."/>
            <person name="Iacono M."/>
            <person name="Ikeo K."/>
            <person name="Iwama A."/>
            <person name="Ishikawa T."/>
            <person name="Jakt M."/>
            <person name="Kanapin A."/>
            <person name="Katoh M."/>
            <person name="Kawasawa Y."/>
            <person name="Kelso J."/>
            <person name="Kitamura H."/>
            <person name="Kitano H."/>
            <person name="Kollias G."/>
            <person name="Krishnan S.P."/>
            <person name="Kruger A."/>
            <person name="Kummerfeld S.K."/>
            <person name="Kurochkin I.V."/>
            <person name="Lareau L.F."/>
            <person name="Lazarevic D."/>
            <person name="Lipovich L."/>
            <person name="Liu J."/>
            <person name="Liuni S."/>
            <person name="McWilliam S."/>
            <person name="Madan Babu M."/>
            <person name="Madera M."/>
            <person name="Marchionni L."/>
            <person name="Matsuda H."/>
            <person name="Matsuzawa S."/>
            <person name="Miki H."/>
            <person name="Mignone F."/>
            <person name="Miyake S."/>
            <person name="Morris K."/>
            <person name="Mottagui-Tabar S."/>
            <person name="Mulder N."/>
            <person name="Nakano N."/>
            <person name="Nakauchi H."/>
            <person name="Ng P."/>
            <person name="Nilsson R."/>
            <person name="Nishiguchi S."/>
            <person name="Nishikawa S."/>
            <person name="Nori F."/>
            <person name="Ohara O."/>
            <person name="Okazaki Y."/>
            <person name="Orlando V."/>
            <person name="Pang K.C."/>
            <person name="Pavan W.J."/>
            <person name="Pavesi G."/>
            <person name="Pesole G."/>
            <person name="Petrovsky N."/>
            <person name="Piazza S."/>
            <person name="Reed J."/>
            <person name="Reid J.F."/>
            <person name="Ring B.Z."/>
            <person name="Ringwald M."/>
            <person name="Rost B."/>
            <person name="Ruan Y."/>
            <person name="Salzberg S.L."/>
            <person name="Sandelin A."/>
            <person name="Schneider C."/>
            <person name="Schoenbach C."/>
            <person name="Sekiguchi K."/>
            <person name="Semple C.A."/>
            <person name="Seno S."/>
            <person name="Sessa L."/>
            <person name="Sheng Y."/>
            <person name="Shibata Y."/>
            <person name="Shimada H."/>
            <person name="Shimada K."/>
            <person name="Silva D."/>
            <person name="Sinclair B."/>
            <person name="Sperling S."/>
            <person name="Stupka E."/>
            <person name="Sugiura K."/>
            <person name="Sultana R."/>
            <person name="Takenaka Y."/>
            <person name="Taki K."/>
            <person name="Tammoja K."/>
            <person name="Tan S.L."/>
            <person name="Tang S."/>
            <person name="Taylor M.S."/>
            <person name="Tegner J."/>
            <person name="Teichmann S.A."/>
            <person name="Ueda H.R."/>
            <person name="van Nimwegen E."/>
            <person name="Verardo R."/>
            <person name="Wei C.L."/>
            <person name="Yagi K."/>
            <person name="Yamanishi H."/>
            <person name="Zabarovsky E."/>
            <person name="Zhu S."/>
            <person name="Zimmer A."/>
            <person name="Hide W."/>
            <person name="Bult C."/>
            <person name="Grimmond S.M."/>
            <person name="Teasdale R.D."/>
            <person name="Liu E.T."/>
            <person name="Brusic V."/>
            <person name="Quackenbush J."/>
            <person name="Wahlestedt C."/>
            <person name="Mattick J.S."/>
            <person name="Hume D.A."/>
            <person name="Kai C."/>
            <person name="Sasaki D."/>
            <person name="Tomaru Y."/>
            <person name="Fukuda S."/>
            <person name="Kanamori-Katayama M."/>
            <person name="Suzuki M."/>
            <person name="Aoki J."/>
            <person name="Arakawa T."/>
            <person name="Iida J."/>
            <person name="Imamura K."/>
            <person name="Itoh M."/>
            <person name="Kato T."/>
            <person name="Kawaji H."/>
            <person name="Kawagashira N."/>
            <person name="Kawashima T."/>
            <person name="Kojima M."/>
            <person name="Kondo S."/>
            <person name="Konno H."/>
            <person name="Nakano K."/>
            <person name="Ninomiya N."/>
            <person name="Nishio T."/>
            <person name="Okada M."/>
            <person name="Plessy C."/>
            <person name="Shibata K."/>
            <person name="Shiraki T."/>
            <person name="Suzuki S."/>
            <person name="Tagami M."/>
            <person name="Waki K."/>
            <person name="Watahiki A."/>
            <person name="Okamura-Oho Y."/>
            <person name="Suzuki H."/>
            <person name="Kawai J."/>
            <person name="Hayashizaki Y."/>
        </authorList>
    </citation>
    <scope>NUCLEOTIDE SEQUENCE [LARGE SCALE MRNA]</scope>
    <source>
        <strain evidence="6">C57BL/6J</strain>
        <tissue evidence="6">Testis</tissue>
    </source>
</reference>
<reference key="3">
    <citation type="journal article" date="2010" name="Cell">
        <title>A tissue-specific atlas of mouse protein phosphorylation and expression.</title>
        <authorList>
            <person name="Huttlin E.L."/>
            <person name="Jedrychowski M.P."/>
            <person name="Elias J.E."/>
            <person name="Goswami T."/>
            <person name="Rad R."/>
            <person name="Beausoleil S.A."/>
            <person name="Villen J."/>
            <person name="Haas W."/>
            <person name="Sowa M.E."/>
            <person name="Gygi S.P."/>
        </authorList>
    </citation>
    <scope>IDENTIFICATION BY MASS SPECTROMETRY [LARGE SCALE ANALYSIS]</scope>
    <source>
        <tissue>Testis</tissue>
    </source>
</reference>
<sequence>MANLQERKSFSKPRISIQASGGTPEAKGIEKRKLSQKRRTLPLQLSLGGHLSPWPTYTSGQTVLHNRKPCSDDSRNRANSCQQQSMSISKPKYLEQLENYLRKELLLLDLSTDSAQELRLQPYREIFEFFIEDFKTYKPLLSSIKNAYEVMLAHQKERIRSLEPLKAKIVTMNEDCSERVLAMRAEERYEISVLKKEKMNLLKLIDKKNEEKISLQSEVAKLRRSLAEEYLRYLTERDARKILIGDLNELRYQQEDMSLAQTPGVWGEDPVKLTLALKMTRQDLTRTQMELNTMKANSGDVVPRRDLEMQEKTNMELQEQLESLKADYEEVQKEHELLLQLHMSTLKERDQFYNELQEIQRTSTPRPDWTKCESIIAGGPERWLVLAEGKNSDQLVDVLLEEIGMGLLREKDFFPGLGFGDAIPPFLRFDGPVKNKKPSKKEVVNLLKDAWKERIAEEQKEPFPDFFFNFLERRFGVNDAMAWAYTIFENIKLFRSSEIMNQFYAVLMGKNLESVYINQKKTLSHLLKELLSVDTQNEGSITMEQFSTILKTTFPLKKEEQIQELMEAVGWGPDSSNTDMLNYRSLFNEDEEGQSEPFVQRLWEQYESDKEAYLEELKQELDLDPLEDVTLLKMRGTLMNIDPTMDKQTLSAYLSQAYQIPAIDVPLEDEEKQGIISIKVETALDRLRMADTKRVGPREPDPAS</sequence>
<feature type="chain" id="PRO_0000323609" description="Translin-associated factor X-interacting protein 1">
    <location>
        <begin position="1"/>
        <end position="704"/>
    </location>
</feature>
<feature type="region of interest" description="Disordered" evidence="2">
    <location>
        <begin position="1"/>
        <end position="37"/>
    </location>
</feature>
<feature type="coiled-coil region" evidence="1">
    <location>
        <begin position="190"/>
        <end position="230"/>
    </location>
</feature>
<feature type="coiled-coil region" evidence="1">
    <location>
        <begin position="304"/>
        <end position="342"/>
    </location>
</feature>
<evidence type="ECO:0000255" key="1"/>
<evidence type="ECO:0000256" key="2">
    <source>
        <dbReference type="SAM" id="MobiDB-lite"/>
    </source>
</evidence>
<evidence type="ECO:0000269" key="3">
    <source>
    </source>
</evidence>
<evidence type="ECO:0000305" key="4"/>
<evidence type="ECO:0000312" key="5">
    <source>
        <dbReference type="EMBL" id="AAK13524.1"/>
    </source>
</evidence>
<evidence type="ECO:0000312" key="6">
    <source>
        <dbReference type="EMBL" id="BAB24380.1"/>
    </source>
</evidence>
<evidence type="ECO:0000312" key="7">
    <source>
        <dbReference type="MGI" id="MGI:1919486"/>
    </source>
</evidence>
<proteinExistence type="evidence at protein level"/>
<name>TXIP1_MOUSE</name>